<protein>
    <recommendedName>
        <fullName>Uncharacterized hydrolase in edin-B 3'region</fullName>
        <ecNumber>3.-.-.-</ecNumber>
    </recommendedName>
    <alternativeName>
        <fullName>ORF8</fullName>
    </alternativeName>
</protein>
<reference key="1">
    <citation type="journal article" date="2002" name="Infect. Immun.">
        <title>Identification of the Staphylococcus aureus etd pathogenicity island which encodes a novel exfoliative toxin, ETD, and EDIN-B.</title>
        <authorList>
            <person name="Yamaguchi T."/>
            <person name="Nishifuji K."/>
            <person name="Sasaki M."/>
            <person name="Fudaba Y."/>
            <person name="Aepfelbacher M."/>
            <person name="Takata T."/>
            <person name="Ohara M."/>
            <person name="Komatsuzawa H."/>
            <person name="Amagai M."/>
            <person name="Sugai M."/>
        </authorList>
    </citation>
    <scope>NUCLEOTIDE SEQUENCE [GENOMIC DNA]</scope>
    <source>
        <strain>TY114</strain>
    </source>
</reference>
<reference key="2">
    <citation type="submission" date="2005-11" db="UniProtKB">
        <title>Shotgun proteomic analysis of total protein extract of S. aureus S30 versus N315.</title>
        <authorList>
            <person name="Stenz L."/>
        </authorList>
    </citation>
    <scope>IDENTIFICATION BY MASS SPECTROMETRY</scope>
    <source>
        <strain>S30</strain>
    </source>
</reference>
<feature type="chain" id="PRO_0000296085" description="Uncharacterized hydrolase in edin-B 3'region">
    <location>
        <begin position="1"/>
        <end position="271"/>
    </location>
</feature>
<accession>Q8GAX4</accession>
<comment type="similarity">
    <text evidence="1">Belongs to the HAD-like hydrolase superfamily.</text>
</comment>
<comment type="sequence caution" evidence="1">
    <conflict type="erroneous initiation">
        <sequence resource="EMBL-CDS" id="BAC22948"/>
    </conflict>
</comment>
<keyword id="KW-0378">Hydrolase</keyword>
<sequence>MSKRLLLFDFDETYFKHNTNEEDLSHLREMEKLLEKLTNNNEVMTAVLTGSTFQSVMDKMDQVNMTFKPLHIFSDLSSKMFTWNNGEYIESETYKKKVFSEPFLFEDIEDILRHISAQYNVEFIPQRAFEGNETHYNFYFHSTGNHSNDRRILEALVRYANDQNYTARFSRSNPLAGDPENAYDIDFTPSNAGKLYATQFLMKKYNIPVKSILGFGDSGNDEAYLSYLEHAYLMSNSRDEALKQKFRLTKYPYYQGITLHVKEFVEGKYDY</sequence>
<evidence type="ECO:0000305" key="1"/>
<name>YEDIN_STAAU</name>
<organism>
    <name type="scientific">Staphylococcus aureus</name>
    <dbReference type="NCBI Taxonomy" id="1280"/>
    <lineage>
        <taxon>Bacteria</taxon>
        <taxon>Bacillati</taxon>
        <taxon>Bacillota</taxon>
        <taxon>Bacilli</taxon>
        <taxon>Bacillales</taxon>
        <taxon>Staphylococcaceae</taxon>
        <taxon>Staphylococcus</taxon>
    </lineage>
</organism>
<dbReference type="EC" id="3.-.-.-"/>
<dbReference type="EMBL" id="AB057421">
    <property type="protein sequence ID" value="BAC22948.1"/>
    <property type="status" value="ALT_INIT"/>
    <property type="molecule type" value="Genomic_DNA"/>
</dbReference>
<dbReference type="RefSeq" id="WP_061838777.1">
    <property type="nucleotide sequence ID" value="NZ_AP027135.1"/>
</dbReference>
<dbReference type="SMR" id="Q8GAX4"/>
<dbReference type="GO" id="GO:0005829">
    <property type="term" value="C:cytosol"/>
    <property type="evidence" value="ECO:0007669"/>
    <property type="project" value="TreeGrafter"/>
</dbReference>
<dbReference type="GO" id="GO:0000287">
    <property type="term" value="F:magnesium ion binding"/>
    <property type="evidence" value="ECO:0007669"/>
    <property type="project" value="TreeGrafter"/>
</dbReference>
<dbReference type="GO" id="GO:0016791">
    <property type="term" value="F:phosphatase activity"/>
    <property type="evidence" value="ECO:0007669"/>
    <property type="project" value="TreeGrafter"/>
</dbReference>
<dbReference type="CDD" id="cd02605">
    <property type="entry name" value="HAD_SPP"/>
    <property type="match status" value="1"/>
</dbReference>
<dbReference type="Gene3D" id="3.40.50.1000">
    <property type="entry name" value="HAD superfamily/HAD-like"/>
    <property type="match status" value="1"/>
</dbReference>
<dbReference type="Gene3D" id="3.30.70.1410">
    <property type="entry name" value="yhjk (haloacid dehalogenase-like hydrolase protein) domain"/>
    <property type="match status" value="1"/>
</dbReference>
<dbReference type="InterPro" id="IPR036412">
    <property type="entry name" value="HAD-like_sf"/>
</dbReference>
<dbReference type="InterPro" id="IPR006379">
    <property type="entry name" value="HAD-SF_hydro_IIB"/>
</dbReference>
<dbReference type="InterPro" id="IPR023214">
    <property type="entry name" value="HAD_sf"/>
</dbReference>
<dbReference type="InterPro" id="IPR006380">
    <property type="entry name" value="SPP-like_dom"/>
</dbReference>
<dbReference type="NCBIfam" id="TIGR01484">
    <property type="entry name" value="HAD-SF-IIB"/>
    <property type="match status" value="1"/>
</dbReference>
<dbReference type="PANTHER" id="PTHR10000:SF57">
    <property type="entry name" value="KANOSAMINE-6-PHOSPHATE PHOSPHATASE"/>
    <property type="match status" value="1"/>
</dbReference>
<dbReference type="PANTHER" id="PTHR10000">
    <property type="entry name" value="PHOSPHOSERINE PHOSPHATASE"/>
    <property type="match status" value="1"/>
</dbReference>
<dbReference type="Pfam" id="PF05116">
    <property type="entry name" value="S6PP"/>
    <property type="match status" value="1"/>
</dbReference>
<dbReference type="SFLD" id="SFLDG01141">
    <property type="entry name" value="C2.B.1:_Sucrose_Phosphatase_Li"/>
    <property type="match status" value="1"/>
</dbReference>
<dbReference type="SFLD" id="SFLDS00003">
    <property type="entry name" value="Haloacid_Dehalogenase"/>
    <property type="match status" value="1"/>
</dbReference>
<dbReference type="SUPFAM" id="SSF56784">
    <property type="entry name" value="HAD-like"/>
    <property type="match status" value="1"/>
</dbReference>
<proteinExistence type="evidence at protein level"/>